<dbReference type="EMBL" id="CR858058">
    <property type="protein sequence ID" value="CAH90297.1"/>
    <property type="molecule type" value="mRNA"/>
</dbReference>
<dbReference type="EMBL" id="CR859850">
    <property type="protein sequence ID" value="CAH92007.1"/>
    <property type="molecule type" value="mRNA"/>
</dbReference>
<dbReference type="RefSeq" id="NP_001125137.1">
    <molecule id="Q5RD60-1"/>
    <property type="nucleotide sequence ID" value="NM_001131665.1"/>
</dbReference>
<dbReference type="RefSeq" id="NP_001128845.1">
    <property type="nucleotide sequence ID" value="NM_001135373.1"/>
</dbReference>
<dbReference type="SMR" id="Q5RD60"/>
<dbReference type="FunCoup" id="Q5RD60">
    <property type="interactions" value="1671"/>
</dbReference>
<dbReference type="STRING" id="9601.ENSPPYP00000005234"/>
<dbReference type="GeneID" id="100189762"/>
<dbReference type="KEGG" id="pon:100189762"/>
<dbReference type="CTD" id="57658"/>
<dbReference type="eggNOG" id="ENOG502QR9J">
    <property type="taxonomic scope" value="Eukaryota"/>
</dbReference>
<dbReference type="InParanoid" id="Q5RD60"/>
<dbReference type="OrthoDB" id="10015001at2759"/>
<dbReference type="Proteomes" id="UP000001595">
    <property type="component" value="Unplaced"/>
</dbReference>
<dbReference type="GO" id="GO:0005737">
    <property type="term" value="C:cytoplasm"/>
    <property type="evidence" value="ECO:0007669"/>
    <property type="project" value="UniProtKB-SubCell"/>
</dbReference>
<dbReference type="GO" id="GO:0005634">
    <property type="term" value="C:nucleus"/>
    <property type="evidence" value="ECO:0007669"/>
    <property type="project" value="UniProtKB-SubCell"/>
</dbReference>
<dbReference type="GO" id="GO:0000978">
    <property type="term" value="F:RNA polymerase II cis-regulatory region sequence-specific DNA binding"/>
    <property type="evidence" value="ECO:0000250"/>
    <property type="project" value="UniProtKB"/>
</dbReference>
<dbReference type="GO" id="GO:0003713">
    <property type="term" value="F:transcription coactivator activity"/>
    <property type="evidence" value="ECO:0000250"/>
    <property type="project" value="UniProtKB"/>
</dbReference>
<dbReference type="GO" id="GO:0008270">
    <property type="term" value="F:zinc ion binding"/>
    <property type="evidence" value="ECO:0007669"/>
    <property type="project" value="UniProtKB-KW"/>
</dbReference>
<dbReference type="GO" id="GO:0045944">
    <property type="term" value="P:positive regulation of transcription by RNA polymerase II"/>
    <property type="evidence" value="ECO:0007669"/>
    <property type="project" value="TreeGrafter"/>
</dbReference>
<dbReference type="GO" id="GO:0016055">
    <property type="term" value="P:Wnt signaling pathway"/>
    <property type="evidence" value="ECO:0007669"/>
    <property type="project" value="UniProtKB-KW"/>
</dbReference>
<dbReference type="CDD" id="cd21967">
    <property type="entry name" value="Zn-C2H2_CALCOCO1"/>
    <property type="match status" value="1"/>
</dbReference>
<dbReference type="FunFam" id="2.60.40.2840:FF:000004">
    <property type="entry name" value="Calcium-binding and coiled-coil domain-containing protein 1"/>
    <property type="match status" value="1"/>
</dbReference>
<dbReference type="Gene3D" id="2.60.40.2840">
    <property type="match status" value="1"/>
</dbReference>
<dbReference type="Gene3D" id="6.20.250.40">
    <property type="match status" value="1"/>
</dbReference>
<dbReference type="InterPro" id="IPR012852">
    <property type="entry name" value="CALCOCO1-like"/>
</dbReference>
<dbReference type="InterPro" id="IPR041641">
    <property type="entry name" value="CALCOCO1/2_Zn_UBZ1"/>
</dbReference>
<dbReference type="InterPro" id="IPR041611">
    <property type="entry name" value="SKICH"/>
</dbReference>
<dbReference type="InterPro" id="IPR051002">
    <property type="entry name" value="UBA_autophagy_assoc_protein"/>
</dbReference>
<dbReference type="PANTHER" id="PTHR31915:SF5">
    <property type="entry name" value="CALCIUM-BINDING AND COILED-COIL DOMAIN-CONTAINING PROTEIN 1"/>
    <property type="match status" value="1"/>
</dbReference>
<dbReference type="PANTHER" id="PTHR31915">
    <property type="entry name" value="SKICH DOMAIN-CONTAINING PROTEIN"/>
    <property type="match status" value="1"/>
</dbReference>
<dbReference type="Pfam" id="PF07888">
    <property type="entry name" value="CALCOCO1"/>
    <property type="match status" value="1"/>
</dbReference>
<dbReference type="Pfam" id="PF17751">
    <property type="entry name" value="SKICH"/>
    <property type="match status" value="1"/>
</dbReference>
<dbReference type="Pfam" id="PF18112">
    <property type="entry name" value="Zn-C2H2_12"/>
    <property type="match status" value="1"/>
</dbReference>
<dbReference type="PROSITE" id="PS51905">
    <property type="entry name" value="ZF_UBZ1"/>
    <property type="match status" value="1"/>
</dbReference>
<comment type="function">
    <text evidence="2">Functions as a coactivator for aryl hydrocarbon and nuclear receptors (NR). Recruited to promoters through its contact with the N-terminal basic helix-loop-helix-Per-Arnt-Sim (PAS) domain of transcription factors or coactivators, such as NCOA2. During ER-activation acts synergistically in combination with other NCOA2-binding proteins, such as EP300, CREBBP and CARM1. Involved in the transcriptional activation of target genes in the Wnt/CTNNB1 pathway. Functions as a secondary coactivator in LEF1-mediated transcriptional activation via its interaction with CTNNB1. Coactivator function for nuclear receptors and LEF1/CTNNB1 involves differential utilization of two different activation regions. In association with CCAR1 enhances GATA1- and MED1-mediated transcriptional activation from the gamma-globin promoter during erythroid differentiation of K562 erythroleukemia cells (By similarity).</text>
</comment>
<comment type="function">
    <text evidence="1">Seems to enhance inorganic pyrophosphatase thus activating phosphogluomutase (PMG). Probably functions as a component of the calphoglin complex, which is involved in linking cellular metabolism (phosphate and glucose metabolism) with other core functions including protein synthesis and degradation, calcium signaling and cell growth (By similarity).</text>
</comment>
<comment type="subunit">
    <text evidence="2 3">Part of a calphoglin complex consisting of CALCOCO1, PPA1 and PGM (By similarity). Interacts with the bHLH-PAS domains of GRIP1, AHR and ARNT. Interacts with CTNNB1 via both its N- and C-terminal regions. Interacts with EP300. Interacts with CCAR1 (via N-terminus) and GATA1 (By similarity).</text>
</comment>
<comment type="subcellular location">
    <subcellularLocation>
        <location evidence="1">Cytoplasm</location>
    </subcellularLocation>
    <subcellularLocation>
        <location evidence="1">Nucleus</location>
    </subcellularLocation>
    <text evidence="1">Shuttles between nucleus and cytoplasm.</text>
</comment>
<comment type="alternative products">
    <event type="alternative splicing"/>
    <isoform>
        <id>Q5RD60-1</id>
        <name>1</name>
        <sequence type="displayed"/>
    </isoform>
    <isoform>
        <id>Q5RD60-2</id>
        <name>2</name>
        <sequence type="described" ref="VSP_029054"/>
    </isoform>
</comment>
<comment type="domain">
    <text evidence="1">The C-terminal activation region (AD) is used for downstream signaling. Seems to be essential for coactivator function with nuclear receptors and with the aryl hydrocarbon receptor (By similarity).</text>
</comment>
<comment type="domain">
    <text evidence="1">The N-terminal activation region (AD) is necessary and sufficient for synergistic activation of LEF1-mediated transcription by CTNNB1. Contains a EP3000 binding region which is important for synergistic cooperation (By similarity).</text>
</comment>
<comment type="domain">
    <text evidence="1">Recruitment by nuclear receptors is accomplished by the interaction of the coiled-coiled domain with p160 coactivators.</text>
</comment>
<comment type="similarity">
    <text evidence="8">Belongs to the CALCOCO family.</text>
</comment>
<sequence>MEESPLSRAPSRGGVNFLNVARTYIPNTKVECHYTLPPGTMPSASDWIGIFKVEAACVRDYHTFVWSSVPESTADGSPIHTSVQFQASYLPKPGAQLYQFRYVNRQGRVCGQSPPFQFREPRPMDELVTLEEADGSSDILLVVPKATVLQNQLDESQQERNDLMQLKLQLEGQVTELRSRVQELERALATARQEHTELMEQYKGISRSHGEITEERDILSRQQGDHVARILELEDDIQTISEKVLTKEVELDRLRDTVKALTREQEKLLGQLKEVQADKEQSEAELQVAQQENHRLNLDLKEAKSWQKEQSAQAQRLKDKVAQMKDTLGQAQQRVAELEPLKEQLRGAQELATSSQQKATLLGEELASAAAARDRTIAELHRSRLEVAEVNGRLAELGLHLKEEKCQWSKERAGLLQSVEAEKDKILKLSAEILRLEKAVQEERTQNHVFKTELAREKDSSLVQLSESKRELTELRSALRVLQKEKEQLQEEKQELLEYMRKLEARLEKVADEKWNEDATTEDEEATAGLSCPAALTDSEDESPEDMRLPPYGLCEHGDPGSSPAGPREASPLVVISQPAPISPHLSGPAEDSSSDSEAEDEKSVLMAAVQSGGEEANLLLPELGNAFYDMASGFTVGPLSETSTGGPATPTWKECPICKERFPAESDKDALEDHMDGHFFFSTQDPFTFE</sequence>
<protein>
    <recommendedName>
        <fullName>Calcium-binding and coiled-coil domain-containing protein 1</fullName>
    </recommendedName>
</protein>
<feature type="chain" id="PRO_0000308901" description="Calcium-binding and coiled-coil domain-containing protein 1">
    <location>
        <begin position="1"/>
        <end position="691"/>
    </location>
</feature>
<feature type="zinc finger region" description="UBZ1-type" evidence="5">
    <location>
        <begin position="653"/>
        <end position="679"/>
    </location>
</feature>
<feature type="region of interest" description="N-terminal AD (CTNNB1 binding site)" evidence="1">
    <location>
        <begin position="1"/>
        <end position="190"/>
    </location>
</feature>
<feature type="region of interest" description="p300 KIX-binding" evidence="1">
    <location>
        <begin position="1"/>
        <end position="30"/>
    </location>
</feature>
<feature type="region of interest" description="Interaction with GATA1" evidence="2">
    <location>
        <begin position="45"/>
        <end position="125"/>
    </location>
</feature>
<feature type="region of interest" description="C-terminal AD (CTNNB1 binding site); interaction with CCAR1" evidence="2">
    <location>
        <begin position="501"/>
        <end position="691"/>
    </location>
</feature>
<feature type="region of interest" description="Disordered" evidence="6">
    <location>
        <begin position="513"/>
        <end position="604"/>
    </location>
</feature>
<feature type="coiled-coil region" evidence="4">
    <location>
        <begin position="145"/>
        <end position="205"/>
    </location>
</feature>
<feature type="coiled-coil region" evidence="4">
    <location>
        <begin position="232"/>
        <end position="339"/>
    </location>
</feature>
<feature type="coiled-coil region" evidence="4">
    <location>
        <begin position="417"/>
        <end position="514"/>
    </location>
</feature>
<feature type="binding site" evidence="5">
    <location>
        <position position="656"/>
    </location>
    <ligand>
        <name>Zn(2+)</name>
        <dbReference type="ChEBI" id="CHEBI:29105"/>
    </ligand>
</feature>
<feature type="binding site" evidence="5">
    <location>
        <position position="659"/>
    </location>
    <ligand>
        <name>Zn(2+)</name>
        <dbReference type="ChEBI" id="CHEBI:29105"/>
    </ligand>
</feature>
<feature type="binding site" evidence="5">
    <location>
        <position position="675"/>
    </location>
    <ligand>
        <name>Zn(2+)</name>
        <dbReference type="ChEBI" id="CHEBI:29105"/>
    </ligand>
</feature>
<feature type="binding site" evidence="5">
    <location>
        <position position="679"/>
    </location>
    <ligand>
        <name>Zn(2+)</name>
        <dbReference type="ChEBI" id="CHEBI:29105"/>
    </ligand>
</feature>
<feature type="modified residue" description="Phosphoserine" evidence="3">
    <location>
        <position position="4"/>
    </location>
</feature>
<feature type="splice variant" id="VSP_029054" description="In isoform 2." evidence="7">
    <location>
        <begin position="463"/>
        <end position="464"/>
    </location>
</feature>
<feature type="sequence conflict" description="In Ref. 1; CAH92007." evidence="8" ref="1">
    <original>S</original>
    <variation>G</variation>
    <location>
        <position position="136"/>
    </location>
</feature>
<feature type="sequence conflict" description="In Ref. 1; CAH92007." evidence="8" ref="1">
    <original>L</original>
    <variation>P</variation>
    <location>
        <position position="188"/>
    </location>
</feature>
<proteinExistence type="evidence at transcript level"/>
<name>CACO1_PONAB</name>
<organism>
    <name type="scientific">Pongo abelii</name>
    <name type="common">Sumatran orangutan</name>
    <name type="synonym">Pongo pygmaeus abelii</name>
    <dbReference type="NCBI Taxonomy" id="9601"/>
    <lineage>
        <taxon>Eukaryota</taxon>
        <taxon>Metazoa</taxon>
        <taxon>Chordata</taxon>
        <taxon>Craniata</taxon>
        <taxon>Vertebrata</taxon>
        <taxon>Euteleostomi</taxon>
        <taxon>Mammalia</taxon>
        <taxon>Eutheria</taxon>
        <taxon>Euarchontoglires</taxon>
        <taxon>Primates</taxon>
        <taxon>Haplorrhini</taxon>
        <taxon>Catarrhini</taxon>
        <taxon>Hominidae</taxon>
        <taxon>Pongo</taxon>
    </lineage>
</organism>
<accession>Q5RD60</accession>
<accession>Q5R8A3</accession>
<evidence type="ECO:0000250" key="1"/>
<evidence type="ECO:0000250" key="2">
    <source>
        <dbReference type="UniProtKB" id="Q8CGU1"/>
    </source>
</evidence>
<evidence type="ECO:0000250" key="3">
    <source>
        <dbReference type="UniProtKB" id="Q9P1Z2"/>
    </source>
</evidence>
<evidence type="ECO:0000255" key="4"/>
<evidence type="ECO:0000255" key="5">
    <source>
        <dbReference type="PROSITE-ProRule" id="PRU01253"/>
    </source>
</evidence>
<evidence type="ECO:0000256" key="6">
    <source>
        <dbReference type="SAM" id="MobiDB-lite"/>
    </source>
</evidence>
<evidence type="ECO:0000303" key="7">
    <source ref="1"/>
</evidence>
<evidence type="ECO:0000305" key="8"/>
<reference key="1">
    <citation type="submission" date="2004-11" db="EMBL/GenBank/DDBJ databases">
        <authorList>
            <consortium name="The German cDNA consortium"/>
        </authorList>
    </citation>
    <scope>NUCLEOTIDE SEQUENCE [LARGE SCALE MRNA] (ISOFORMS 1 AND 2)</scope>
    <source>
        <tissue>Brain cortex</tissue>
    </source>
</reference>
<keyword id="KW-0010">Activator</keyword>
<keyword id="KW-0025">Alternative splicing</keyword>
<keyword id="KW-0175">Coiled coil</keyword>
<keyword id="KW-0963">Cytoplasm</keyword>
<keyword id="KW-0479">Metal-binding</keyword>
<keyword id="KW-0539">Nucleus</keyword>
<keyword id="KW-0597">Phosphoprotein</keyword>
<keyword id="KW-1185">Reference proteome</keyword>
<keyword id="KW-0804">Transcription</keyword>
<keyword id="KW-0805">Transcription regulation</keyword>
<keyword id="KW-0879">Wnt signaling pathway</keyword>
<keyword id="KW-0862">Zinc</keyword>
<keyword id="KW-0863">Zinc-finger</keyword>
<gene>
    <name type="primary">CALCOCO1</name>
</gene>